<accession>Q2NQU2</accession>
<comment type="similarity">
    <text evidence="1">Belongs to the bacterial ribosomal protein bL28 family.</text>
</comment>
<reference key="1">
    <citation type="journal article" date="2006" name="Genome Res.">
        <title>Massive genome erosion and functional adaptations provide insights into the symbiotic lifestyle of Sodalis glossinidius in the tsetse host.</title>
        <authorList>
            <person name="Toh H."/>
            <person name="Weiss B.L."/>
            <person name="Perkin S.A.H."/>
            <person name="Yamashita A."/>
            <person name="Oshima K."/>
            <person name="Hattori M."/>
            <person name="Aksoy S."/>
        </authorList>
    </citation>
    <scope>NUCLEOTIDE SEQUENCE [LARGE SCALE GENOMIC DNA]</scope>
    <source>
        <strain>morsitans</strain>
    </source>
</reference>
<organism>
    <name type="scientific">Sodalis glossinidius (strain morsitans)</name>
    <dbReference type="NCBI Taxonomy" id="343509"/>
    <lineage>
        <taxon>Bacteria</taxon>
        <taxon>Pseudomonadati</taxon>
        <taxon>Pseudomonadota</taxon>
        <taxon>Gammaproteobacteria</taxon>
        <taxon>Enterobacterales</taxon>
        <taxon>Bruguierivoracaceae</taxon>
        <taxon>Sodalis</taxon>
    </lineage>
</organism>
<feature type="chain" id="PRO_1000007360" description="Large ribosomal subunit protein bL28">
    <location>
        <begin position="1"/>
        <end position="78"/>
    </location>
</feature>
<feature type="region of interest" description="Disordered" evidence="2">
    <location>
        <begin position="1"/>
        <end position="21"/>
    </location>
</feature>
<evidence type="ECO:0000255" key="1">
    <source>
        <dbReference type="HAMAP-Rule" id="MF_00373"/>
    </source>
</evidence>
<evidence type="ECO:0000256" key="2">
    <source>
        <dbReference type="SAM" id="MobiDB-lite"/>
    </source>
</evidence>
<evidence type="ECO:0000305" key="3"/>
<keyword id="KW-0687">Ribonucleoprotein</keyword>
<keyword id="KW-0689">Ribosomal protein</keyword>
<proteinExistence type="inferred from homology"/>
<name>RL28_SODGM</name>
<dbReference type="EMBL" id="AP008232">
    <property type="protein sequence ID" value="BAE75483.1"/>
    <property type="molecule type" value="Genomic_DNA"/>
</dbReference>
<dbReference type="SMR" id="Q2NQU2"/>
<dbReference type="STRING" id="343509.SG2208"/>
<dbReference type="KEGG" id="sgl:SG2208"/>
<dbReference type="eggNOG" id="COG0227">
    <property type="taxonomic scope" value="Bacteria"/>
</dbReference>
<dbReference type="HOGENOM" id="CLU_064548_3_1_6"/>
<dbReference type="OrthoDB" id="9805609at2"/>
<dbReference type="BioCyc" id="SGLO343509:SGP1_RS28480-MONOMER"/>
<dbReference type="Proteomes" id="UP000001932">
    <property type="component" value="Chromosome"/>
</dbReference>
<dbReference type="GO" id="GO:0022625">
    <property type="term" value="C:cytosolic large ribosomal subunit"/>
    <property type="evidence" value="ECO:0007669"/>
    <property type="project" value="TreeGrafter"/>
</dbReference>
<dbReference type="GO" id="GO:0003735">
    <property type="term" value="F:structural constituent of ribosome"/>
    <property type="evidence" value="ECO:0007669"/>
    <property type="project" value="InterPro"/>
</dbReference>
<dbReference type="GO" id="GO:0006412">
    <property type="term" value="P:translation"/>
    <property type="evidence" value="ECO:0007669"/>
    <property type="project" value="UniProtKB-UniRule"/>
</dbReference>
<dbReference type="FunFam" id="2.30.170.40:FF:000001">
    <property type="entry name" value="50S ribosomal protein L28"/>
    <property type="match status" value="1"/>
</dbReference>
<dbReference type="Gene3D" id="2.30.170.40">
    <property type="entry name" value="Ribosomal protein L28/L24"/>
    <property type="match status" value="1"/>
</dbReference>
<dbReference type="HAMAP" id="MF_00373">
    <property type="entry name" value="Ribosomal_bL28"/>
    <property type="match status" value="1"/>
</dbReference>
<dbReference type="InterPro" id="IPR026569">
    <property type="entry name" value="Ribosomal_bL28"/>
</dbReference>
<dbReference type="InterPro" id="IPR034704">
    <property type="entry name" value="Ribosomal_bL28/bL31-like_sf"/>
</dbReference>
<dbReference type="InterPro" id="IPR001383">
    <property type="entry name" value="Ribosomal_bL28_bact-type"/>
</dbReference>
<dbReference type="InterPro" id="IPR037147">
    <property type="entry name" value="Ribosomal_bL28_sf"/>
</dbReference>
<dbReference type="NCBIfam" id="TIGR00009">
    <property type="entry name" value="L28"/>
    <property type="match status" value="1"/>
</dbReference>
<dbReference type="PANTHER" id="PTHR13528">
    <property type="entry name" value="39S RIBOSOMAL PROTEIN L28, MITOCHONDRIAL"/>
    <property type="match status" value="1"/>
</dbReference>
<dbReference type="PANTHER" id="PTHR13528:SF2">
    <property type="entry name" value="LARGE RIBOSOMAL SUBUNIT PROTEIN BL28M"/>
    <property type="match status" value="1"/>
</dbReference>
<dbReference type="Pfam" id="PF00830">
    <property type="entry name" value="Ribosomal_L28"/>
    <property type="match status" value="1"/>
</dbReference>
<dbReference type="SUPFAM" id="SSF143800">
    <property type="entry name" value="L28p-like"/>
    <property type="match status" value="1"/>
</dbReference>
<gene>
    <name evidence="1" type="primary">rpmB</name>
    <name type="ordered locus">SG2208</name>
</gene>
<protein>
    <recommendedName>
        <fullName evidence="1">Large ribosomal subunit protein bL28</fullName>
    </recommendedName>
    <alternativeName>
        <fullName evidence="3">50S ribosomal protein L28</fullName>
    </alternativeName>
</protein>
<sequence length="78" mass="8985">MSRVCQVTGKRPVSGNNRSHAMNATKRRFLPNLHSHRFWVESEKRFVTLRVSAKGMRVIDKKGIETVLADLCVRGEKY</sequence>